<keyword id="KW-0325">Glycoprotein</keyword>
<keyword id="KW-1035">Host cytoplasm</keyword>
<keyword id="KW-0460">Magnesium</keyword>
<keyword id="KW-0479">Metal-binding</keyword>
<keyword id="KW-0547">Nucleotide-binding</keyword>
<keyword id="KW-0597">Phosphoprotein</keyword>
<keyword id="KW-0694">RNA-binding</keyword>
<feature type="chain" id="PRO_0000149638" description="Non-structural protein 5">
    <location>
        <begin position="1"/>
        <end position="197"/>
    </location>
</feature>
<feature type="region of interest" description="Disordered" evidence="2">
    <location>
        <begin position="17"/>
        <end position="37"/>
    </location>
</feature>
<feature type="region of interest" description="Disordered" evidence="2">
    <location>
        <begin position="53"/>
        <end position="72"/>
    </location>
</feature>
<feature type="region of interest" description="Disordered" evidence="2">
    <location>
        <begin position="85"/>
        <end position="104"/>
    </location>
</feature>
<feature type="region of interest" description="Disordered" evidence="2">
    <location>
        <begin position="129"/>
        <end position="166"/>
    </location>
</feature>
<feature type="compositionally biased region" description="Low complexity" evidence="2">
    <location>
        <begin position="17"/>
        <end position="30"/>
    </location>
</feature>
<feature type="compositionally biased region" description="Polar residues" evidence="2">
    <location>
        <begin position="91"/>
        <end position="104"/>
    </location>
</feature>
<feature type="compositionally biased region" description="Acidic residues" evidence="2">
    <location>
        <begin position="152"/>
        <end position="165"/>
    </location>
</feature>
<feature type="binding site" evidence="1">
    <location>
        <position position="92"/>
    </location>
    <ligand>
        <name>Mg(2+)</name>
        <dbReference type="ChEBI" id="CHEBI:18420"/>
    </ligand>
</feature>
<feature type="modified residue" description="Phosphoserine; by host CK1" evidence="1">
    <location>
        <position position="67"/>
    </location>
</feature>
<feature type="modified residue" description="Phosphoserine; by host" evidence="1">
    <location>
        <position position="153"/>
    </location>
</feature>
<feature type="modified residue" description="Phosphoserine; by host" evidence="1">
    <location>
        <position position="155"/>
    </location>
</feature>
<feature type="modified residue" description="Phosphoserine; by host" evidence="1">
    <location>
        <position position="163"/>
    </location>
</feature>
<feature type="modified residue" description="Phosphoserine; by host" evidence="1">
    <location>
        <position position="165"/>
    </location>
</feature>
<sequence>MSLSIDVTSLPSISSSIFKNESSSTTSTLSGKSIGRSEQYISPDAEAFNKYMLSKSPEDIGPSDSASNDPLTSFSIRSNAVKTNADAGVSMDSSTQSRPSSNVGCDQVDFSLTKGINVSANLDSCVSISTDNKKEKSKKDKSRKHYPRIEADSDSEDYVLDDSDSDDGKCKNCKYKKRCFALRVRMKQVAMQLIEDL</sequence>
<dbReference type="EMBL" id="X15519">
    <property type="protein sequence ID" value="CAA33540.1"/>
    <property type="molecule type" value="Genomic_RNA"/>
</dbReference>
<dbReference type="PIR" id="A34009">
    <property type="entry name" value="VHXRPU"/>
</dbReference>
<dbReference type="GO" id="GO:0030430">
    <property type="term" value="C:host cell cytoplasm"/>
    <property type="evidence" value="ECO:0007669"/>
    <property type="project" value="UniProtKB-SubCell"/>
</dbReference>
<dbReference type="GO" id="GO:0016887">
    <property type="term" value="F:ATP hydrolysis activity"/>
    <property type="evidence" value="ECO:0007669"/>
    <property type="project" value="UniProtKB-UniRule"/>
</dbReference>
<dbReference type="GO" id="GO:0000287">
    <property type="term" value="F:magnesium ion binding"/>
    <property type="evidence" value="ECO:0007669"/>
    <property type="project" value="UniProtKB-UniRule"/>
</dbReference>
<dbReference type="GO" id="GO:0000166">
    <property type="term" value="F:nucleotide binding"/>
    <property type="evidence" value="ECO:0007669"/>
    <property type="project" value="UniProtKB-UniRule"/>
</dbReference>
<dbReference type="GO" id="GO:0003723">
    <property type="term" value="F:RNA binding"/>
    <property type="evidence" value="ECO:0007669"/>
    <property type="project" value="UniProtKB-UniRule"/>
</dbReference>
<dbReference type="GO" id="GO:0019079">
    <property type="term" value="P:viral genome replication"/>
    <property type="evidence" value="ECO:0007669"/>
    <property type="project" value="UniProtKB-UniRule"/>
</dbReference>
<dbReference type="HAMAP" id="MF_04092">
    <property type="entry name" value="ROTA_NSP5"/>
    <property type="match status" value="1"/>
</dbReference>
<dbReference type="InterPro" id="IPR002512">
    <property type="entry name" value="Rotavirus_A/C_NSP5"/>
</dbReference>
<dbReference type="Pfam" id="PF01525">
    <property type="entry name" value="Rota_NS26"/>
    <property type="match status" value="1"/>
</dbReference>
<dbReference type="PIRSF" id="PIRSF004006">
    <property type="entry name" value="Rota_NS26"/>
    <property type="match status" value="1"/>
</dbReference>
<accession>P19715</accession>
<proteinExistence type="evidence at protein level"/>
<organism>
    <name type="scientific">Rotavirus A (strain RVA/Pig/United States/OSU/1977/G5P9[7])</name>
    <name type="common">RV-A</name>
    <name type="synonym">Rotavirus A (strain Ohio State University)</name>
    <dbReference type="NCBI Taxonomy" id="10915"/>
    <lineage>
        <taxon>Viruses</taxon>
        <taxon>Riboviria</taxon>
        <taxon>Orthornavirae</taxon>
        <taxon>Duplornaviricota</taxon>
        <taxon>Resentoviricetes</taxon>
        <taxon>Reovirales</taxon>
        <taxon>Sedoreoviridae</taxon>
        <taxon>Rotavirus</taxon>
        <taxon>Rotavirus A</taxon>
    </lineage>
</organism>
<reference key="1">
    <citation type="journal article" date="1989" name="Nucleic Acids Res.">
        <title>Porcine OSU rotavirus segment II sequence shows common features with the viral gene of human origin.</title>
        <authorList>
            <person name="Gonzalez S.A."/>
            <person name="Burrone O.R."/>
        </authorList>
    </citation>
    <scope>NUCLEOTIDE SEQUENCE [GENOMIC RNA]</scope>
</reference>
<reference key="2">
    <citation type="journal article" date="1991" name="Virology">
        <title>Rotavirus NS26 is modified by addition of single O-linked residues of N-acetylglucosamine.</title>
        <authorList>
            <person name="Gonzalez S.A."/>
            <person name="Burrone O.R."/>
        </authorList>
    </citation>
    <scope>GLYCOSYLATION</scope>
</reference>
<reference key="3">
    <citation type="journal article" date="1996" name="J. Gen. Virol.">
        <title>Phosphorylation generates different forms of rotavirus NSP5.</title>
        <authorList>
            <person name="Afrikanova I."/>
            <person name="Miozzo M.C."/>
            <person name="Giambiagi S."/>
            <person name="Burrone O.R."/>
        </authorList>
    </citation>
    <scope>PHOSPHORYLATION</scope>
</reference>
<reference key="4">
    <citation type="journal article" date="2004" name="J. Gen. Virol.">
        <title>Characterization of rotavirus NSP2/NSP5 interactions and the dynamics of viroplasm formation.</title>
        <authorList>
            <person name="Eichwald C."/>
            <person name="Rodriguez J.F."/>
            <person name="Burrone O.R."/>
        </authorList>
    </citation>
    <scope>SUBCELLULAR LOCATION</scope>
    <scope>INTERACTION WITH NSP2</scope>
</reference>
<reference key="5">
    <citation type="journal article" date="2007" name="J. Gen. Virol.">
        <title>Impaired hyperphosphorylation of rotavirus NSP5 in cells depleted of casein kinase 1alpha is associated with the formation of viroplasms with altered morphology and a moderate decrease in virus replication.</title>
        <authorList>
            <person name="Campagna M."/>
            <person name="Budini M."/>
            <person name="Arnoldi F."/>
            <person name="Desselberger U."/>
            <person name="Allende J.E."/>
            <person name="Burrone O.R."/>
        </authorList>
    </citation>
    <scope>ROLE OF PHOSPHORYLATION BY HOST CK1</scope>
</reference>
<protein>
    <recommendedName>
        <fullName evidence="1">Non-structural protein 5</fullName>
        <shortName evidence="1">NSP5</shortName>
    </recommendedName>
    <alternativeName>
        <fullName evidence="1">NS26</fullName>
    </alternativeName>
</protein>
<name>NSP5_ROTP5</name>
<comment type="function">
    <text evidence="1">Plays an essential role in the viral genome replication. Participates, together with NSP2, in the formation of viral factories (viroplasms), which are large inclusions in the host cytoplasm where replication intermediates are assembled and viral RNA replication takes place. Orchestrates the recruitment of viroplasmic proteins such as capsid proteins to these factories. Participates in the selective exclusion of host proteins from stress granules (SG) and P bodies (PB). Also participates in the sequestration of these remodeled organelles in viral factories.</text>
</comment>
<comment type="cofactor">
    <cofactor evidence="1">
        <name>Mg(2+)</name>
        <dbReference type="ChEBI" id="CHEBI:18420"/>
    </cofactor>
</comment>
<comment type="subunit">
    <text evidence="1">Homodimer. Interacts with VP1. Interacts with VP2. Interacts with NSP2; this interaction leads to up-regulation of NSP5 hyperphosphorylation and formation of virus factories. Interacts with NSP6. Participates in the selective exclusion of host proteins from stress granules (SG) and P bodies (PB). Also participates in the sequestration of these remodeled organelles in viral factories.</text>
</comment>
<comment type="subcellular location">
    <subcellularLocation>
        <location evidence="1 3">Host cytoplasm</location>
    </subcellularLocation>
    <text evidence="1">Found in spherical cytoplasmic structures, called virus factories, that appear early after infection and are the site of viral replication and packaging.</text>
</comment>
<comment type="PTM">
    <text evidence="1 5">O-glycosylated.</text>
</comment>
<comment type="PTM">
    <text evidence="1 4 6">Hyperphosphorylated on serine residues, when in dimeric form. Phosphorylation by host CK1 is required for the hyperphosphorylation of NSP5 dimer.</text>
</comment>
<comment type="similarity">
    <text evidence="1">Belongs to the rotavirus NSP5 family.</text>
</comment>
<organismHost>
    <name type="scientific">Sus scrofa</name>
    <name type="common">Pig</name>
    <dbReference type="NCBI Taxonomy" id="9823"/>
</organismHost>
<evidence type="ECO:0000255" key="1">
    <source>
        <dbReference type="HAMAP-Rule" id="MF_04092"/>
    </source>
</evidence>
<evidence type="ECO:0000256" key="2">
    <source>
        <dbReference type="SAM" id="MobiDB-lite"/>
    </source>
</evidence>
<evidence type="ECO:0000269" key="3">
    <source>
    </source>
</evidence>
<evidence type="ECO:0000269" key="4">
    <source>
    </source>
</evidence>
<evidence type="ECO:0000269" key="5">
    <source>
    </source>
</evidence>
<evidence type="ECO:0000269" key="6">
    <source>
    </source>
</evidence>